<organism>
    <name type="scientific">Xanthomonas campestris pv. campestris (strain B100)</name>
    <dbReference type="NCBI Taxonomy" id="509169"/>
    <lineage>
        <taxon>Bacteria</taxon>
        <taxon>Pseudomonadati</taxon>
        <taxon>Pseudomonadota</taxon>
        <taxon>Gammaproteobacteria</taxon>
        <taxon>Lysobacterales</taxon>
        <taxon>Lysobacteraceae</taxon>
        <taxon>Xanthomonas</taxon>
    </lineage>
</organism>
<dbReference type="EC" id="3.2.1.52" evidence="1"/>
<dbReference type="EMBL" id="AM920689">
    <property type="protein sequence ID" value="CAP52383.1"/>
    <property type="molecule type" value="Genomic_DNA"/>
</dbReference>
<dbReference type="SMR" id="B0RX17"/>
<dbReference type="KEGG" id="xca:xcc-b100_3020"/>
<dbReference type="HOGENOM" id="CLU_008392_0_0_6"/>
<dbReference type="UniPathway" id="UPA00544"/>
<dbReference type="Proteomes" id="UP000001188">
    <property type="component" value="Chromosome"/>
</dbReference>
<dbReference type="GO" id="GO:0005737">
    <property type="term" value="C:cytoplasm"/>
    <property type="evidence" value="ECO:0007669"/>
    <property type="project" value="UniProtKB-SubCell"/>
</dbReference>
<dbReference type="GO" id="GO:0004563">
    <property type="term" value="F:beta-N-acetylhexosaminidase activity"/>
    <property type="evidence" value="ECO:0007669"/>
    <property type="project" value="UniProtKB-UniRule"/>
</dbReference>
<dbReference type="GO" id="GO:0005975">
    <property type="term" value="P:carbohydrate metabolic process"/>
    <property type="evidence" value="ECO:0007669"/>
    <property type="project" value="InterPro"/>
</dbReference>
<dbReference type="GO" id="GO:0051301">
    <property type="term" value="P:cell division"/>
    <property type="evidence" value="ECO:0007669"/>
    <property type="project" value="UniProtKB-KW"/>
</dbReference>
<dbReference type="GO" id="GO:0071555">
    <property type="term" value="P:cell wall organization"/>
    <property type="evidence" value="ECO:0007669"/>
    <property type="project" value="UniProtKB-KW"/>
</dbReference>
<dbReference type="GO" id="GO:0009252">
    <property type="term" value="P:peptidoglycan biosynthetic process"/>
    <property type="evidence" value="ECO:0007669"/>
    <property type="project" value="UniProtKB-KW"/>
</dbReference>
<dbReference type="GO" id="GO:0009254">
    <property type="term" value="P:peptidoglycan turnover"/>
    <property type="evidence" value="ECO:0007669"/>
    <property type="project" value="UniProtKB-UniRule"/>
</dbReference>
<dbReference type="GO" id="GO:0008360">
    <property type="term" value="P:regulation of cell shape"/>
    <property type="evidence" value="ECO:0007669"/>
    <property type="project" value="UniProtKB-KW"/>
</dbReference>
<dbReference type="Gene3D" id="3.20.20.300">
    <property type="entry name" value="Glycoside hydrolase, family 3, N-terminal domain"/>
    <property type="match status" value="1"/>
</dbReference>
<dbReference type="HAMAP" id="MF_00364">
    <property type="entry name" value="NagZ"/>
    <property type="match status" value="1"/>
</dbReference>
<dbReference type="InterPro" id="IPR022956">
    <property type="entry name" value="Beta_hexosaminidase_bac"/>
</dbReference>
<dbReference type="InterPro" id="IPR019800">
    <property type="entry name" value="Glyco_hydro_3_AS"/>
</dbReference>
<dbReference type="InterPro" id="IPR001764">
    <property type="entry name" value="Glyco_hydro_3_N"/>
</dbReference>
<dbReference type="InterPro" id="IPR036962">
    <property type="entry name" value="Glyco_hydro_3_N_sf"/>
</dbReference>
<dbReference type="InterPro" id="IPR017853">
    <property type="entry name" value="Glycoside_hydrolase_SF"/>
</dbReference>
<dbReference type="InterPro" id="IPR050226">
    <property type="entry name" value="NagZ_Beta-hexosaminidase"/>
</dbReference>
<dbReference type="NCBIfam" id="NF003740">
    <property type="entry name" value="PRK05337.1"/>
    <property type="match status" value="1"/>
</dbReference>
<dbReference type="PANTHER" id="PTHR30480:SF13">
    <property type="entry name" value="BETA-HEXOSAMINIDASE"/>
    <property type="match status" value="1"/>
</dbReference>
<dbReference type="PANTHER" id="PTHR30480">
    <property type="entry name" value="BETA-HEXOSAMINIDASE-RELATED"/>
    <property type="match status" value="1"/>
</dbReference>
<dbReference type="Pfam" id="PF00933">
    <property type="entry name" value="Glyco_hydro_3"/>
    <property type="match status" value="1"/>
</dbReference>
<dbReference type="SUPFAM" id="SSF51445">
    <property type="entry name" value="(Trans)glycosidases"/>
    <property type="match status" value="1"/>
</dbReference>
<dbReference type="PROSITE" id="PS00775">
    <property type="entry name" value="GLYCOSYL_HYDROL_F3"/>
    <property type="match status" value="1"/>
</dbReference>
<feature type="chain" id="PRO_1000121077" description="Beta-hexosaminidase">
    <location>
        <begin position="1"/>
        <end position="331"/>
    </location>
</feature>
<feature type="active site" description="Proton donor/acceptor" evidence="1">
    <location>
        <position position="176"/>
    </location>
</feature>
<feature type="active site" description="Nucleophile" evidence="1">
    <location>
        <position position="247"/>
    </location>
</feature>
<feature type="binding site" evidence="1">
    <location>
        <position position="60"/>
    </location>
    <ligand>
        <name>substrate</name>
    </ligand>
</feature>
<feature type="binding site" evidence="1">
    <location>
        <position position="68"/>
    </location>
    <ligand>
        <name>substrate</name>
    </ligand>
</feature>
<feature type="binding site" evidence="1">
    <location>
        <position position="133"/>
    </location>
    <ligand>
        <name>substrate</name>
    </ligand>
</feature>
<feature type="binding site" evidence="1">
    <location>
        <begin position="163"/>
        <end position="164"/>
    </location>
    <ligand>
        <name>substrate</name>
    </ligand>
</feature>
<feature type="site" description="Important for catalytic activity" evidence="1">
    <location>
        <position position="174"/>
    </location>
</feature>
<evidence type="ECO:0000255" key="1">
    <source>
        <dbReference type="HAMAP-Rule" id="MF_00364"/>
    </source>
</evidence>
<name>NAGZ_XANCB</name>
<keyword id="KW-0131">Cell cycle</keyword>
<keyword id="KW-0132">Cell division</keyword>
<keyword id="KW-0133">Cell shape</keyword>
<keyword id="KW-0961">Cell wall biogenesis/degradation</keyword>
<keyword id="KW-0963">Cytoplasm</keyword>
<keyword id="KW-0326">Glycosidase</keyword>
<keyword id="KW-0378">Hydrolase</keyword>
<keyword id="KW-0573">Peptidoglycan synthesis</keyword>
<sequence>MLLIGVAGTELSAQERDWLQHDAVAGVVLFKRNFASRTQVAELSAAIRAAAPRPQLICVDQEGGRVQRFREGYSALAPLQSFGALYATDPEGALAQARAHAQLMASEVRASGVDLSFAPVVDLARGNRAIGDRAFSDDPQVVASFTRAYVQALHAAGMGATLKHFPGHGTVLEDTHVDHASDPRPLDVLLAEDLVPFVAGIDAGADAVMMAHVVYPQVAPEPAGYASRWIEQILRGQLGFRGVVFSDDIGMAASFSAGGVAGRVHAHLDAGCDVVLVCHPELVAESLQAVAGRTLNTAALIGLIGRGALGWDGLLADAPTTSLSASFGTLA</sequence>
<reference key="1">
    <citation type="journal article" date="2008" name="J. Biotechnol.">
        <title>The genome of Xanthomonas campestris pv. campestris B100 and its use for the reconstruction of metabolic pathways involved in xanthan biosynthesis.</title>
        <authorList>
            <person name="Vorhoelter F.-J."/>
            <person name="Schneiker S."/>
            <person name="Goesmann A."/>
            <person name="Krause L."/>
            <person name="Bekel T."/>
            <person name="Kaiser O."/>
            <person name="Linke B."/>
            <person name="Patschkowski T."/>
            <person name="Rueckert C."/>
            <person name="Schmid J."/>
            <person name="Sidhu V.K."/>
            <person name="Sieber V."/>
            <person name="Tauch A."/>
            <person name="Watt S.A."/>
            <person name="Weisshaar B."/>
            <person name="Becker A."/>
            <person name="Niehaus K."/>
            <person name="Puehler A."/>
        </authorList>
    </citation>
    <scope>NUCLEOTIDE SEQUENCE [LARGE SCALE GENOMIC DNA]</scope>
    <source>
        <strain>B100</strain>
    </source>
</reference>
<proteinExistence type="inferred from homology"/>
<protein>
    <recommendedName>
        <fullName evidence="1">Beta-hexosaminidase</fullName>
        <ecNumber evidence="1">3.2.1.52</ecNumber>
    </recommendedName>
    <alternativeName>
        <fullName evidence="1">Beta-N-acetylhexosaminidase</fullName>
    </alternativeName>
    <alternativeName>
        <fullName evidence="1">N-acetyl-beta-glucosaminidase</fullName>
    </alternativeName>
</protein>
<accession>B0RX17</accession>
<comment type="function">
    <text evidence="1">Plays a role in peptidoglycan recycling by cleaving the terminal beta-1,4-linked N-acetylglucosamine (GlcNAc) from peptide-linked peptidoglycan fragments, giving rise to free GlcNAc, anhydro-N-acetylmuramic acid and anhydro-N-acetylmuramic acid-linked peptides.</text>
</comment>
<comment type="catalytic activity">
    <reaction evidence="1">
        <text>Hydrolysis of terminal non-reducing N-acetyl-D-hexosamine residues in N-acetyl-beta-D-hexosaminides.</text>
        <dbReference type="EC" id="3.2.1.52"/>
    </reaction>
</comment>
<comment type="pathway">
    <text evidence="1">Cell wall biogenesis; peptidoglycan recycling.</text>
</comment>
<comment type="subcellular location">
    <subcellularLocation>
        <location evidence="1">Cytoplasm</location>
    </subcellularLocation>
</comment>
<comment type="similarity">
    <text evidence="1">Belongs to the glycosyl hydrolase 3 family. NagZ subfamily.</text>
</comment>
<gene>
    <name evidence="1" type="primary">nagZ</name>
    <name type="ordered locus">xcc-b100_3020</name>
</gene>